<sequence>MNRVFRNTIFYLLILLVVIGVVSYFQTSNPKTENMSYSTFIKNLDDGKVDSVSVQPVRGVYEVKGQLKNYDKDQYFLTHVPEGKGADQIFNALKKTDVKVEPAQETSGWVTFLTTIIPFVIIFILFFFLLNQAQGGGSRVMNFGKSKAKLYTEEKKRVKFKDVAGADEEKQELVEVVEFLKDPRKFAELGARIPKGVLLVGPPGTGKTLLAKACAGEAGVPFFSISGSDFVEMFVGVGASRVRDLFENAKKNAPCLIFIDEIDAVGRQRGAGLGGGHDEREQTLNQLLVEMDGFSANEGIIIIAATNRADILDPALLRPGRFDRQITVDRPDVIGREAVLKVHARNKPLDETVNLKSIAMRTPGFSGADLENLLNEAALVAARQNKKKIDARDIDEATDRVIAGPAKKSRVISKKERNIVAYHEGGHTVIGLVLDEADMVHKVTIVPRGQAGGYAVMLPREDRYFQTKPELLDKIVGLLGGRVAEEIIFGEVSTGAHNDFQRATNIARRMVTEFGMSEKLGPLQFGQSQGGQVFLGRDFNNEQNYSDQIAYEIDQEIQRIIKECYERAKQILTENRDKLELIAQTLLKVETLDAEQIKHLIDHGTLPERNFSDDEKNDDVKVNILTKTEEKKDDTKE</sequence>
<feature type="chain" id="PRO_0000084627" description="ATP-dependent zinc metalloprotease FtsH">
    <location>
        <begin position="1"/>
        <end position="637"/>
    </location>
</feature>
<feature type="topological domain" description="Cytoplasmic" evidence="1">
    <location>
        <begin position="1"/>
        <end position="7"/>
    </location>
</feature>
<feature type="transmembrane region" description="Helical" evidence="1">
    <location>
        <begin position="8"/>
        <end position="28"/>
    </location>
</feature>
<feature type="topological domain" description="Extracellular" evidence="1">
    <location>
        <begin position="29"/>
        <end position="109"/>
    </location>
</feature>
<feature type="transmembrane region" description="Helical" evidence="1">
    <location>
        <begin position="110"/>
        <end position="130"/>
    </location>
</feature>
<feature type="topological domain" description="Cytoplasmic" evidence="1">
    <location>
        <begin position="131"/>
        <end position="637"/>
    </location>
</feature>
<feature type="region of interest" description="Not necessary for FtsH function">
    <location>
        <begin position="514"/>
        <end position="637"/>
    </location>
</feature>
<feature type="active site" evidence="1">
    <location>
        <position position="424"/>
    </location>
</feature>
<feature type="binding site" evidence="1">
    <location>
        <begin position="201"/>
        <end position="208"/>
    </location>
    <ligand>
        <name>ATP</name>
        <dbReference type="ChEBI" id="CHEBI:30616"/>
    </ligand>
</feature>
<feature type="binding site" evidence="1">
    <location>
        <position position="423"/>
    </location>
    <ligand>
        <name>Zn(2+)</name>
        <dbReference type="ChEBI" id="CHEBI:29105"/>
        <note>catalytic</note>
    </ligand>
</feature>
<feature type="binding site" evidence="1">
    <location>
        <position position="427"/>
    </location>
    <ligand>
        <name>Zn(2+)</name>
        <dbReference type="ChEBI" id="CHEBI:29105"/>
        <note>catalytic</note>
    </ligand>
</feature>
<feature type="binding site" evidence="1">
    <location>
        <position position="499"/>
    </location>
    <ligand>
        <name>Zn(2+)</name>
        <dbReference type="ChEBI" id="CHEBI:29105"/>
        <note>catalytic</note>
    </ligand>
</feature>
<feature type="mutagenesis site" description="Does not complement an ftsH deletion, loss of ATPase activity." evidence="3">
    <original>K</original>
    <variation>N</variation>
    <location>
        <position position="207"/>
    </location>
</feature>
<feature type="mutagenesis site" description="Does not complement an ftsH deletion, loss of protease activity against casein." evidence="3">
    <original>E</original>
    <variation>Q</variation>
    <location>
        <position position="424"/>
    </location>
</feature>
<accession>P37476</accession>
<comment type="function">
    <text evidence="1">Acts as a processive, ATP-dependent zinc metallopeptidase for both cytoplasmic and membrane proteins. Plays a role in the quality control of integral membrane proteins.</text>
</comment>
<comment type="function">
    <text evidence="4 7 14">In vitro partially degrades Spo0E, the phosphatase that acts on Spo0A-P. Recognition requires the last 14 residues of Spo0E (PubMed:19332814). Its stabile accumulation requires FlotA and Flot (PubMed:24222488). May degrade EzrA (Probable).</text>
</comment>
<comment type="cofactor">
    <cofactor evidence="1">
        <name>Zn(2+)</name>
        <dbReference type="ChEBI" id="CHEBI:29105"/>
    </cofactor>
    <text evidence="1">Binds 1 zinc ion per subunit.</text>
</comment>
<comment type="subunit">
    <text evidence="1 6 8 9 13">Homohexamer (By similarity). Interacts with FloT at midcell (Probable) (PubMed:23651456, PubMed:26297017). Interacts with FloA at midcell (Probable). Another study shows only minor colocalization with FloA or FloT (PubMed:27362352).</text>
</comment>
<comment type="subcellular location">
    <subcellularLocation>
        <location evidence="5 6 9 12">Cell membrane</location>
        <topology evidence="12">Multi-pass membrane protein</topology>
        <orientation evidence="12">Cytoplasmic side</orientation>
    </subcellularLocation>
    <subcellularLocation>
        <location evidence="5 6 9">Membrane raft</location>
        <topology>Multi-pass membrane protein</topology>
    </subcellularLocation>
    <text evidence="2 5 6">Accumulates in the midcell septum during vegetative cell division. At the septa colocalizes with FloA and FloT, which seem to stabilize it in the membrane (PubMed:10851010, PubMed:22882210). At the onset of sporulation appears at positions near the cell poles that may coincide with future division sites. Then, FtsH becomes concentrated at the sporulation septum and disappears from the distal pole (PubMed:10851010). Present in detergent-resistant membrane (DRM) fractions that may be equivalent to eukaryotic membrane rafts; these rafts include proteins involved in signaling, molecule trafficking and protein secretion (PubMed:22882210, PubMed:23651456).</text>
</comment>
<comment type="developmental stage">
    <text evidence="4">Necessary only for stage 0 of sporulation.</text>
</comment>
<comment type="induction">
    <text evidence="10">Induced by osmotic shock (0.8 M NaCl) and by heat shock (52 degrees Celsius).</text>
</comment>
<comment type="disruption phenotype">
    <text evidence="5 11">Required for expression of the stage 0 sporulation gene Spo0A, as well as for a normal heat or osmotic stress response, cells lacking this gene grow as long filaments and tend to lyse upon entry into stationary phase. Secretion of some extracellular proteins is also reduced (PubMed:9076729). Loss of biofilm formation (PubMed:22882210).</text>
</comment>
<comment type="similarity">
    <text evidence="1">In the central section; belongs to the AAA ATPase family.</text>
</comment>
<comment type="similarity">
    <text evidence="1">In the C-terminal section; belongs to the peptidase M41 family.</text>
</comment>
<evidence type="ECO:0000255" key="1">
    <source>
        <dbReference type="HAMAP-Rule" id="MF_01458"/>
    </source>
</evidence>
<evidence type="ECO:0000269" key="2">
    <source>
    </source>
</evidence>
<evidence type="ECO:0000269" key="3">
    <source>
    </source>
</evidence>
<evidence type="ECO:0000269" key="4">
    <source>
    </source>
</evidence>
<evidence type="ECO:0000269" key="5">
    <source>
    </source>
</evidence>
<evidence type="ECO:0000269" key="6">
    <source>
    </source>
</evidence>
<evidence type="ECO:0000269" key="7">
    <source>
    </source>
</evidence>
<evidence type="ECO:0000269" key="8">
    <source>
    </source>
</evidence>
<evidence type="ECO:0000269" key="9">
    <source>
    </source>
</evidence>
<evidence type="ECO:0000269" key="10">
    <source>
    </source>
</evidence>
<evidence type="ECO:0000269" key="11">
    <source>
    </source>
</evidence>
<evidence type="ECO:0000305" key="12">
    <source>
    </source>
</evidence>
<evidence type="ECO:0000305" key="13">
    <source>
    </source>
</evidence>
<evidence type="ECO:0000305" key="14">
    <source>
    </source>
</evidence>
<keyword id="KW-0067">ATP-binding</keyword>
<keyword id="KW-0131">Cell cycle</keyword>
<keyword id="KW-0132">Cell division</keyword>
<keyword id="KW-1003">Cell membrane</keyword>
<keyword id="KW-0378">Hydrolase</keyword>
<keyword id="KW-0472">Membrane</keyword>
<keyword id="KW-0479">Metal-binding</keyword>
<keyword id="KW-0482">Metalloprotease</keyword>
<keyword id="KW-0547">Nucleotide-binding</keyword>
<keyword id="KW-0645">Protease</keyword>
<keyword id="KW-1185">Reference proteome</keyword>
<keyword id="KW-0346">Stress response</keyword>
<keyword id="KW-0812">Transmembrane</keyword>
<keyword id="KW-1133">Transmembrane helix</keyword>
<keyword id="KW-0862">Zinc</keyword>
<gene>
    <name evidence="1" type="primary">ftsH</name>
    <name type="ordered locus">BSU00690</name>
</gene>
<dbReference type="EC" id="3.4.24.-" evidence="1"/>
<dbReference type="EMBL" id="D26185">
    <property type="protein sequence ID" value="BAA05304.1"/>
    <property type="molecule type" value="Genomic_DNA"/>
</dbReference>
<dbReference type="EMBL" id="AL009126">
    <property type="protein sequence ID" value="CAB11845.1"/>
    <property type="molecule type" value="Genomic_DNA"/>
</dbReference>
<dbReference type="PIR" id="E69627">
    <property type="entry name" value="E69627"/>
</dbReference>
<dbReference type="RefSeq" id="NP_387950.1">
    <property type="nucleotide sequence ID" value="NC_000964.3"/>
</dbReference>
<dbReference type="RefSeq" id="WP_003243881.1">
    <property type="nucleotide sequence ID" value="NZ_OZ025638.1"/>
</dbReference>
<dbReference type="SMR" id="P37476"/>
<dbReference type="FunCoup" id="P37476">
    <property type="interactions" value="711"/>
</dbReference>
<dbReference type="IntAct" id="P37476">
    <property type="interactions" value="8"/>
</dbReference>
<dbReference type="MINT" id="P37476"/>
<dbReference type="STRING" id="224308.BSU00690"/>
<dbReference type="MEROPS" id="M41.009"/>
<dbReference type="jPOST" id="P37476"/>
<dbReference type="PaxDb" id="224308-BSU00690"/>
<dbReference type="EnsemblBacteria" id="CAB11845">
    <property type="protein sequence ID" value="CAB11845"/>
    <property type="gene ID" value="BSU_00690"/>
</dbReference>
<dbReference type="GeneID" id="938094"/>
<dbReference type="KEGG" id="bsu:BSU00690"/>
<dbReference type="PATRIC" id="fig|224308.179.peg.69"/>
<dbReference type="eggNOG" id="COG0465">
    <property type="taxonomic scope" value="Bacteria"/>
</dbReference>
<dbReference type="InParanoid" id="P37476"/>
<dbReference type="OrthoDB" id="9809379at2"/>
<dbReference type="PhylomeDB" id="P37476"/>
<dbReference type="BioCyc" id="BSUB:BSU00690-MONOMER"/>
<dbReference type="Proteomes" id="UP000001570">
    <property type="component" value="Chromosome"/>
</dbReference>
<dbReference type="GO" id="GO:0030428">
    <property type="term" value="C:cell septum"/>
    <property type="evidence" value="ECO:0000314"/>
    <property type="project" value="UniProtKB"/>
</dbReference>
<dbReference type="GO" id="GO:0045121">
    <property type="term" value="C:membrane raft"/>
    <property type="evidence" value="ECO:0007669"/>
    <property type="project" value="UniProtKB-SubCell"/>
</dbReference>
<dbReference type="GO" id="GO:0005886">
    <property type="term" value="C:plasma membrane"/>
    <property type="evidence" value="ECO:0007669"/>
    <property type="project" value="UniProtKB-SubCell"/>
</dbReference>
<dbReference type="GO" id="GO:0005524">
    <property type="term" value="F:ATP binding"/>
    <property type="evidence" value="ECO:0007669"/>
    <property type="project" value="UniProtKB-UniRule"/>
</dbReference>
<dbReference type="GO" id="GO:0016887">
    <property type="term" value="F:ATP hydrolysis activity"/>
    <property type="evidence" value="ECO:0007669"/>
    <property type="project" value="UniProtKB-UniRule"/>
</dbReference>
<dbReference type="GO" id="GO:0004176">
    <property type="term" value="F:ATP-dependent peptidase activity"/>
    <property type="evidence" value="ECO:0000318"/>
    <property type="project" value="GO_Central"/>
</dbReference>
<dbReference type="GO" id="GO:0004222">
    <property type="term" value="F:metalloendopeptidase activity"/>
    <property type="evidence" value="ECO:0007669"/>
    <property type="project" value="InterPro"/>
</dbReference>
<dbReference type="GO" id="GO:0008233">
    <property type="term" value="F:peptidase activity"/>
    <property type="evidence" value="ECO:0000314"/>
    <property type="project" value="UniProtKB"/>
</dbReference>
<dbReference type="GO" id="GO:0008270">
    <property type="term" value="F:zinc ion binding"/>
    <property type="evidence" value="ECO:0007669"/>
    <property type="project" value="UniProtKB-UniRule"/>
</dbReference>
<dbReference type="GO" id="GO:0051301">
    <property type="term" value="P:cell division"/>
    <property type="evidence" value="ECO:0007669"/>
    <property type="project" value="UniProtKB-KW"/>
</dbReference>
<dbReference type="GO" id="GO:0030163">
    <property type="term" value="P:protein catabolic process"/>
    <property type="evidence" value="ECO:0000314"/>
    <property type="project" value="UniProtKB"/>
</dbReference>
<dbReference type="GO" id="GO:0006508">
    <property type="term" value="P:proteolysis"/>
    <property type="evidence" value="ECO:0000318"/>
    <property type="project" value="GO_Central"/>
</dbReference>
<dbReference type="GO" id="GO:0043934">
    <property type="term" value="P:sporulation"/>
    <property type="evidence" value="ECO:0000315"/>
    <property type="project" value="UniProtKB"/>
</dbReference>
<dbReference type="CDD" id="cd19501">
    <property type="entry name" value="RecA-like_FtsH"/>
    <property type="match status" value="1"/>
</dbReference>
<dbReference type="FunFam" id="1.10.8.60:FF:000001">
    <property type="entry name" value="ATP-dependent zinc metalloprotease FtsH"/>
    <property type="match status" value="1"/>
</dbReference>
<dbReference type="FunFam" id="1.20.58.760:FF:000001">
    <property type="entry name" value="ATP-dependent zinc metalloprotease FtsH"/>
    <property type="match status" value="1"/>
</dbReference>
<dbReference type="FunFam" id="3.40.50.300:FF:000001">
    <property type="entry name" value="ATP-dependent zinc metalloprotease FtsH"/>
    <property type="match status" value="1"/>
</dbReference>
<dbReference type="Gene3D" id="1.10.8.60">
    <property type="match status" value="1"/>
</dbReference>
<dbReference type="Gene3D" id="3.30.720.210">
    <property type="match status" value="1"/>
</dbReference>
<dbReference type="Gene3D" id="3.40.50.300">
    <property type="entry name" value="P-loop containing nucleotide triphosphate hydrolases"/>
    <property type="match status" value="1"/>
</dbReference>
<dbReference type="Gene3D" id="1.20.58.760">
    <property type="entry name" value="Peptidase M41"/>
    <property type="match status" value="1"/>
</dbReference>
<dbReference type="HAMAP" id="MF_01458">
    <property type="entry name" value="FtsH"/>
    <property type="match status" value="1"/>
</dbReference>
<dbReference type="InterPro" id="IPR003593">
    <property type="entry name" value="AAA+_ATPase"/>
</dbReference>
<dbReference type="InterPro" id="IPR041569">
    <property type="entry name" value="AAA_lid_3"/>
</dbReference>
<dbReference type="InterPro" id="IPR003959">
    <property type="entry name" value="ATPase_AAA_core"/>
</dbReference>
<dbReference type="InterPro" id="IPR003960">
    <property type="entry name" value="ATPase_AAA_CS"/>
</dbReference>
<dbReference type="InterPro" id="IPR005936">
    <property type="entry name" value="FtsH"/>
</dbReference>
<dbReference type="InterPro" id="IPR027417">
    <property type="entry name" value="P-loop_NTPase"/>
</dbReference>
<dbReference type="InterPro" id="IPR011546">
    <property type="entry name" value="Pept_M41_FtsH_extracell"/>
</dbReference>
<dbReference type="InterPro" id="IPR000642">
    <property type="entry name" value="Peptidase_M41"/>
</dbReference>
<dbReference type="InterPro" id="IPR037219">
    <property type="entry name" value="Peptidase_M41-like"/>
</dbReference>
<dbReference type="NCBIfam" id="TIGR01241">
    <property type="entry name" value="FtsH_fam"/>
    <property type="match status" value="1"/>
</dbReference>
<dbReference type="PANTHER" id="PTHR23076:SF113">
    <property type="entry name" value="ATP-DEPENDENT ZINC METALLOPROTEASE FTSH 1, CHLOROPLASTIC-RELATED"/>
    <property type="match status" value="1"/>
</dbReference>
<dbReference type="PANTHER" id="PTHR23076">
    <property type="entry name" value="METALLOPROTEASE M41 FTSH"/>
    <property type="match status" value="1"/>
</dbReference>
<dbReference type="Pfam" id="PF00004">
    <property type="entry name" value="AAA"/>
    <property type="match status" value="1"/>
</dbReference>
<dbReference type="Pfam" id="PF17862">
    <property type="entry name" value="AAA_lid_3"/>
    <property type="match status" value="1"/>
</dbReference>
<dbReference type="Pfam" id="PF06480">
    <property type="entry name" value="FtsH_ext"/>
    <property type="match status" value="1"/>
</dbReference>
<dbReference type="Pfam" id="PF01434">
    <property type="entry name" value="Peptidase_M41"/>
    <property type="match status" value="1"/>
</dbReference>
<dbReference type="SMART" id="SM00382">
    <property type="entry name" value="AAA"/>
    <property type="match status" value="1"/>
</dbReference>
<dbReference type="SUPFAM" id="SSF140990">
    <property type="entry name" value="FtsH protease domain-like"/>
    <property type="match status" value="1"/>
</dbReference>
<dbReference type="SUPFAM" id="SSF52540">
    <property type="entry name" value="P-loop containing nucleoside triphosphate hydrolases"/>
    <property type="match status" value="1"/>
</dbReference>
<dbReference type="PROSITE" id="PS00674">
    <property type="entry name" value="AAA"/>
    <property type="match status" value="1"/>
</dbReference>
<proteinExistence type="evidence at protein level"/>
<protein>
    <recommendedName>
        <fullName evidence="1">ATP-dependent zinc metalloprotease FtsH</fullName>
        <ecNumber evidence="1">3.4.24.-</ecNumber>
    </recommendedName>
    <alternativeName>
        <fullName>Cell division protease FtsH</fullName>
    </alternativeName>
</protein>
<name>FTSH_BACSU</name>
<organism>
    <name type="scientific">Bacillus subtilis (strain 168)</name>
    <dbReference type="NCBI Taxonomy" id="224308"/>
    <lineage>
        <taxon>Bacteria</taxon>
        <taxon>Bacillati</taxon>
        <taxon>Bacillota</taxon>
        <taxon>Bacilli</taxon>
        <taxon>Bacillales</taxon>
        <taxon>Bacillaceae</taxon>
        <taxon>Bacillus</taxon>
    </lineage>
</organism>
<reference key="1">
    <citation type="journal article" date="1994" name="DNA Res.">
        <title>Systematic sequencing of the 180 kilobase region of the Bacillus subtilis chromosome containing the replication origin.</title>
        <authorList>
            <person name="Ogasawara N."/>
            <person name="Nakai S."/>
            <person name="Yoshikawa H."/>
        </authorList>
    </citation>
    <scope>NUCLEOTIDE SEQUENCE [GENOMIC DNA]</scope>
    <source>
        <strain>168</strain>
    </source>
</reference>
<reference key="2">
    <citation type="journal article" date="1997" name="Nature">
        <title>The complete genome sequence of the Gram-positive bacterium Bacillus subtilis.</title>
        <authorList>
            <person name="Kunst F."/>
            <person name="Ogasawara N."/>
            <person name="Moszer I."/>
            <person name="Albertini A.M."/>
            <person name="Alloni G."/>
            <person name="Azevedo V."/>
            <person name="Bertero M.G."/>
            <person name="Bessieres P."/>
            <person name="Bolotin A."/>
            <person name="Borchert S."/>
            <person name="Borriss R."/>
            <person name="Boursier L."/>
            <person name="Brans A."/>
            <person name="Braun M."/>
            <person name="Brignell S.C."/>
            <person name="Bron S."/>
            <person name="Brouillet S."/>
            <person name="Bruschi C.V."/>
            <person name="Caldwell B."/>
            <person name="Capuano V."/>
            <person name="Carter N.M."/>
            <person name="Choi S.-K."/>
            <person name="Codani J.-J."/>
            <person name="Connerton I.F."/>
            <person name="Cummings N.J."/>
            <person name="Daniel R.A."/>
            <person name="Denizot F."/>
            <person name="Devine K.M."/>
            <person name="Duesterhoeft A."/>
            <person name="Ehrlich S.D."/>
            <person name="Emmerson P.T."/>
            <person name="Entian K.-D."/>
            <person name="Errington J."/>
            <person name="Fabret C."/>
            <person name="Ferrari E."/>
            <person name="Foulger D."/>
            <person name="Fritz C."/>
            <person name="Fujita M."/>
            <person name="Fujita Y."/>
            <person name="Fuma S."/>
            <person name="Galizzi A."/>
            <person name="Galleron N."/>
            <person name="Ghim S.-Y."/>
            <person name="Glaser P."/>
            <person name="Goffeau A."/>
            <person name="Golightly E.J."/>
            <person name="Grandi G."/>
            <person name="Guiseppi G."/>
            <person name="Guy B.J."/>
            <person name="Haga K."/>
            <person name="Haiech J."/>
            <person name="Harwood C.R."/>
            <person name="Henaut A."/>
            <person name="Hilbert H."/>
            <person name="Holsappel S."/>
            <person name="Hosono S."/>
            <person name="Hullo M.-F."/>
            <person name="Itaya M."/>
            <person name="Jones L.-M."/>
            <person name="Joris B."/>
            <person name="Karamata D."/>
            <person name="Kasahara Y."/>
            <person name="Klaerr-Blanchard M."/>
            <person name="Klein C."/>
            <person name="Kobayashi Y."/>
            <person name="Koetter P."/>
            <person name="Koningstein G."/>
            <person name="Krogh S."/>
            <person name="Kumano M."/>
            <person name="Kurita K."/>
            <person name="Lapidus A."/>
            <person name="Lardinois S."/>
            <person name="Lauber J."/>
            <person name="Lazarevic V."/>
            <person name="Lee S.-M."/>
            <person name="Levine A."/>
            <person name="Liu H."/>
            <person name="Masuda S."/>
            <person name="Mauel C."/>
            <person name="Medigue C."/>
            <person name="Medina N."/>
            <person name="Mellado R.P."/>
            <person name="Mizuno M."/>
            <person name="Moestl D."/>
            <person name="Nakai S."/>
            <person name="Noback M."/>
            <person name="Noone D."/>
            <person name="O'Reilly M."/>
            <person name="Ogawa K."/>
            <person name="Ogiwara A."/>
            <person name="Oudega B."/>
            <person name="Park S.-H."/>
            <person name="Parro V."/>
            <person name="Pohl T.M."/>
            <person name="Portetelle D."/>
            <person name="Porwollik S."/>
            <person name="Prescott A.M."/>
            <person name="Presecan E."/>
            <person name="Pujic P."/>
            <person name="Purnelle B."/>
            <person name="Rapoport G."/>
            <person name="Rey M."/>
            <person name="Reynolds S."/>
            <person name="Rieger M."/>
            <person name="Rivolta C."/>
            <person name="Rocha E."/>
            <person name="Roche B."/>
            <person name="Rose M."/>
            <person name="Sadaie Y."/>
            <person name="Sato T."/>
            <person name="Scanlan E."/>
            <person name="Schleich S."/>
            <person name="Schroeter R."/>
            <person name="Scoffone F."/>
            <person name="Sekiguchi J."/>
            <person name="Sekowska A."/>
            <person name="Seror S.J."/>
            <person name="Serror P."/>
            <person name="Shin B.-S."/>
            <person name="Soldo B."/>
            <person name="Sorokin A."/>
            <person name="Tacconi E."/>
            <person name="Takagi T."/>
            <person name="Takahashi H."/>
            <person name="Takemaru K."/>
            <person name="Takeuchi M."/>
            <person name="Tamakoshi A."/>
            <person name="Tanaka T."/>
            <person name="Terpstra P."/>
            <person name="Tognoni A."/>
            <person name="Tosato V."/>
            <person name="Uchiyama S."/>
            <person name="Vandenbol M."/>
            <person name="Vannier F."/>
            <person name="Vassarotti A."/>
            <person name="Viari A."/>
            <person name="Wambutt R."/>
            <person name="Wedler E."/>
            <person name="Wedler H."/>
            <person name="Weitzenegger T."/>
            <person name="Winters P."/>
            <person name="Wipat A."/>
            <person name="Yamamoto H."/>
            <person name="Yamane K."/>
            <person name="Yasumoto K."/>
            <person name="Yata K."/>
            <person name="Yoshida K."/>
            <person name="Yoshikawa H.-F."/>
            <person name="Zumstein E."/>
            <person name="Yoshikawa H."/>
            <person name="Danchin A."/>
        </authorList>
    </citation>
    <scope>NUCLEOTIDE SEQUENCE [LARGE SCALE GENOMIC DNA]</scope>
    <source>
        <strain>168</strain>
    </source>
</reference>
<reference key="3">
    <citation type="journal article" date="1995" name="J. Bacteriol.">
        <title>The ftsH gene of Bacillus subtilis is transiently induced after osmotic and temperature upshift.</title>
        <authorList>
            <person name="Deuerling E."/>
            <person name="Paeslack B."/>
            <person name="Schumann W."/>
        </authorList>
    </citation>
    <scope>INDUCTION</scope>
    <source>
        <strain>1012</strain>
    </source>
</reference>
<reference key="4">
    <citation type="journal article" date="1997" name="Mol. Microbiol.">
        <title>The ftsH gene of Bacillus subtilis is involved in major cellular processes such as sporulation, stress adaptation and secretion.</title>
        <authorList>
            <person name="Deuerling E."/>
            <person name="Mogk A."/>
            <person name="Richter C."/>
            <person name="Purucker M."/>
            <person name="Schumann W."/>
        </authorList>
    </citation>
    <scope>DISRUPTION PHENOTYPE</scope>
    <source>
        <strain>1012</strain>
    </source>
</reference>
<reference key="5">
    <citation type="journal article" date="1999" name="J. Bacteriol.">
        <title>Role of the sporulation protein BofA in regulating activation of the Bacillus subtilis developmental transcription factor sigmaK.</title>
        <authorList>
            <person name="Resnekov O."/>
        </authorList>
    </citation>
    <scope>SPOIVFA AS A POSSIBLE SUBSTRATE</scope>
</reference>
<reference key="6">
    <citation type="journal article" date="2000" name="J. Bacteriol.">
        <title>The FtsH protein accumulates at the septum of Bacillus subtilis during cell division and sporulation.</title>
        <authorList>
            <person name="Wehrl W."/>
            <person name="Niederweis M."/>
            <person name="Schumann W."/>
        </authorList>
    </citation>
    <scope>SUBCELLULAR LOCATION</scope>
</reference>
<reference key="7">
    <citation type="journal article" date="2004" name="Curr. Microbiol.">
        <title>Construction and analyses of mutant ftsH alleles of Bacillus subtilis involving the ATPase- and Zn-binding domains.</title>
        <authorList>
            <person name="Kotschwar M."/>
            <person name="Harfst E."/>
            <person name="Ohanjan T."/>
            <person name="Schumann W."/>
        </authorList>
    </citation>
    <scope>ATPASE AND PROTEASE ACTIVITIES</scope>
    <scope>MUTAGENESIS OF LYS-207 AND GLU-424</scope>
    <source>
        <strain>1012</strain>
    </source>
</reference>
<reference key="8">
    <citation type="journal article" date="2009" name="Microbiology">
        <title>The Spo0E phosphatase of Bacillus subtilis is a substrate of the FtsH metalloprotease.</title>
        <authorList>
            <person name="Le A.T."/>
            <person name="Schumann W."/>
        </authorList>
    </citation>
    <scope>SPO0E AS SUBSTRATE</scope>
    <scope>DEVELOPMENTAL STAGE</scope>
    <source>
        <strain>1012</strain>
    </source>
</reference>
<reference key="9">
    <citation type="journal article" date="2012" name="Mol. Microbiol.">
        <title>The biofilm formation defect of a Bacillus subtilis flotillin-defective mutant involves the protease FtsH.</title>
        <authorList>
            <person name="Yepes A."/>
            <person name="Schneider J."/>
            <person name="Mielich B."/>
            <person name="Koch G."/>
            <person name="Garcia-Betancur J.C."/>
            <person name="Ramamurthi K.S."/>
            <person name="Vlamakis H."/>
            <person name="Lopez D."/>
        </authorList>
    </citation>
    <scope>INTERACTION WITH FLOA AND FLOT</scope>
    <scope>SUBCELLULAR LOCATION</scope>
    <scope>DISRUPTION PHENOTYPE</scope>
    <source>
        <strain>168 / Marburg / ATCC 6051 / DSM 10 / JCM 1465 / NBRC 13719 / NCIMB 3610 / NRRL NRS-744 / VKM B-501</strain>
    </source>
</reference>
<reference key="10">
    <citation type="journal article" date="2013" name="Mol. Microbiol.">
        <title>Flotillins functionally organize the bacterial membrane.</title>
        <authorList>
            <person name="Bach J.N."/>
            <person name="Bramkamp M."/>
        </authorList>
    </citation>
    <scope>INTERACTION WITH FLOT</scope>
    <scope>SUBCELLULAR LOCATION</scope>
    <source>
        <strain>168</strain>
    </source>
</reference>
<reference key="11">
    <citation type="journal article" date="2013" name="MBio">
        <title>Overproduction of flotillin influences cell differentiation and shape in Bacillus subtilis.</title>
        <authorList>
            <person name="Mielich-Suess B."/>
            <person name="Schneider J."/>
            <person name="Lopez D."/>
        </authorList>
    </citation>
    <scope>EZRA AS A POSSIBLE SUBSTRATE</scope>
    <scope>STABILIZATION BY FLOA AND FLOT</scope>
    <source>
        <strain>168 / PY79</strain>
    </source>
</reference>
<reference key="12">
    <citation type="journal article" date="2015" name="Microbiology">
        <title>In vivo characterization of the scaffold activity of flotillin on the membrane kinase KinC of Bacillus subtilis.</title>
        <authorList>
            <person name="Schneider J."/>
            <person name="Mielich-Suess B."/>
            <person name="Boehme R."/>
            <person name="Lopez D."/>
        </authorList>
    </citation>
    <scope>INTERACTION WITH FLOT</scope>
    <source>
        <strain>168 / Marburg / ATCC 6051 / DSM 10 / JCM 1465 / NBRC 13719 / NCIMB 3610 / NRRL NRS-744 / VKM B-501</strain>
    </source>
</reference>
<reference key="13">
    <citation type="journal article" date="2016" name="PLoS Genet.">
        <title>Super Resolution Fluorescence Microscopy and Tracking of Bacterial Flotillin (Reggie) Paralogs Provide Evidence for Defined-Sized Protein Microdomains within the Bacterial Membrane but Absence of Clusters Containing Detergent-Resistant Proteins.</title>
        <authorList>
            <person name="Dempwolff F."/>
            <person name="Schmidt F.K."/>
            <person name="Hervas A.B."/>
            <person name="Stroh A."/>
            <person name="Roesch T.C."/>
            <person name="Riese C.N."/>
            <person name="Dersch S."/>
            <person name="Heimerl T."/>
            <person name="Lucena D."/>
            <person name="Huelsbusch N."/>
            <person name="Stuermer C.A."/>
            <person name="Takeshita N."/>
            <person name="Fischer R."/>
            <person name="Eckhardt B."/>
            <person name="Graumann P.L."/>
        </authorList>
    </citation>
    <scope>SUBCELLULAR LOCATION</scope>
    <source>
        <strain>168 / PY79</strain>
    </source>
</reference>